<organism>
    <name type="scientific">Chlorobium chlorochromatii (strain CaD3)</name>
    <dbReference type="NCBI Taxonomy" id="340177"/>
    <lineage>
        <taxon>Bacteria</taxon>
        <taxon>Pseudomonadati</taxon>
        <taxon>Chlorobiota</taxon>
        <taxon>Chlorobiia</taxon>
        <taxon>Chlorobiales</taxon>
        <taxon>Chlorobiaceae</taxon>
        <taxon>Chlorobium/Pelodictyon group</taxon>
        <taxon>Chlorobium</taxon>
    </lineage>
</organism>
<comment type="function">
    <text evidence="1">This protein is one of the early assembly proteins of the 50S ribosomal subunit, although it is not seen to bind rRNA by itself. It is important during the early stages of 50S assembly.</text>
</comment>
<comment type="subunit">
    <text evidence="1">Part of the 50S ribosomal subunit.</text>
</comment>
<comment type="similarity">
    <text evidence="1">Belongs to the universal ribosomal protein uL13 family.</text>
</comment>
<comment type="sequence caution" evidence="2">
    <conflict type="erroneous initiation">
        <sequence resource="EMBL-CDS" id="ABB28902"/>
    </conflict>
</comment>
<proteinExistence type="inferred from homology"/>
<sequence>MSKTLSFKTYSAKPAEVERTWYVIDAEGLVLGRMASEIAKVLRGKHKPQFTPHIDTGDFIVVTNAEKVLLTGRKSEQKTYFTHSHYPGGVRIDEVKDVIRTKPERVIENAVWGMLPHNNLGRQLFRKLKVYAGTNHPHASQSPIEMKIN</sequence>
<dbReference type="EMBL" id="CP000108">
    <property type="protein sequence ID" value="ABB28902.1"/>
    <property type="status" value="ALT_INIT"/>
    <property type="molecule type" value="Genomic_DNA"/>
</dbReference>
<dbReference type="SMR" id="Q3AQ23"/>
<dbReference type="STRING" id="340177.Cag_1650"/>
<dbReference type="KEGG" id="cch:Cag_1650"/>
<dbReference type="eggNOG" id="COG0102">
    <property type="taxonomic scope" value="Bacteria"/>
</dbReference>
<dbReference type="HOGENOM" id="CLU_082184_2_2_10"/>
<dbReference type="OrthoDB" id="9801330at2"/>
<dbReference type="GO" id="GO:0022625">
    <property type="term" value="C:cytosolic large ribosomal subunit"/>
    <property type="evidence" value="ECO:0007669"/>
    <property type="project" value="TreeGrafter"/>
</dbReference>
<dbReference type="GO" id="GO:0003729">
    <property type="term" value="F:mRNA binding"/>
    <property type="evidence" value="ECO:0007669"/>
    <property type="project" value="TreeGrafter"/>
</dbReference>
<dbReference type="GO" id="GO:0003735">
    <property type="term" value="F:structural constituent of ribosome"/>
    <property type="evidence" value="ECO:0007669"/>
    <property type="project" value="InterPro"/>
</dbReference>
<dbReference type="GO" id="GO:0017148">
    <property type="term" value="P:negative regulation of translation"/>
    <property type="evidence" value="ECO:0007669"/>
    <property type="project" value="TreeGrafter"/>
</dbReference>
<dbReference type="GO" id="GO:0006412">
    <property type="term" value="P:translation"/>
    <property type="evidence" value="ECO:0007669"/>
    <property type="project" value="UniProtKB-UniRule"/>
</dbReference>
<dbReference type="CDD" id="cd00392">
    <property type="entry name" value="Ribosomal_L13"/>
    <property type="match status" value="1"/>
</dbReference>
<dbReference type="FunFam" id="3.90.1180.10:FF:000001">
    <property type="entry name" value="50S ribosomal protein L13"/>
    <property type="match status" value="1"/>
</dbReference>
<dbReference type="Gene3D" id="3.90.1180.10">
    <property type="entry name" value="Ribosomal protein L13"/>
    <property type="match status" value="1"/>
</dbReference>
<dbReference type="HAMAP" id="MF_01366">
    <property type="entry name" value="Ribosomal_uL13"/>
    <property type="match status" value="1"/>
</dbReference>
<dbReference type="InterPro" id="IPR005822">
    <property type="entry name" value="Ribosomal_uL13"/>
</dbReference>
<dbReference type="InterPro" id="IPR005823">
    <property type="entry name" value="Ribosomal_uL13_bac-type"/>
</dbReference>
<dbReference type="InterPro" id="IPR036899">
    <property type="entry name" value="Ribosomal_uL13_sf"/>
</dbReference>
<dbReference type="NCBIfam" id="TIGR01066">
    <property type="entry name" value="rplM_bact"/>
    <property type="match status" value="1"/>
</dbReference>
<dbReference type="PANTHER" id="PTHR11545:SF2">
    <property type="entry name" value="LARGE RIBOSOMAL SUBUNIT PROTEIN UL13M"/>
    <property type="match status" value="1"/>
</dbReference>
<dbReference type="PANTHER" id="PTHR11545">
    <property type="entry name" value="RIBOSOMAL PROTEIN L13"/>
    <property type="match status" value="1"/>
</dbReference>
<dbReference type="Pfam" id="PF00572">
    <property type="entry name" value="Ribosomal_L13"/>
    <property type="match status" value="1"/>
</dbReference>
<dbReference type="PIRSF" id="PIRSF002181">
    <property type="entry name" value="Ribosomal_L13"/>
    <property type="match status" value="1"/>
</dbReference>
<dbReference type="SUPFAM" id="SSF52161">
    <property type="entry name" value="Ribosomal protein L13"/>
    <property type="match status" value="1"/>
</dbReference>
<gene>
    <name evidence="1" type="primary">rplM</name>
    <name type="ordered locus">Cag_1650</name>
</gene>
<feature type="chain" id="PRO_0000261707" description="Large ribosomal subunit protein uL13">
    <location>
        <begin position="1"/>
        <end position="149"/>
    </location>
</feature>
<accession>Q3AQ23</accession>
<keyword id="KW-0687">Ribonucleoprotein</keyword>
<keyword id="KW-0689">Ribosomal protein</keyword>
<name>RL13_CHLCH</name>
<reference key="1">
    <citation type="submission" date="2005-08" db="EMBL/GenBank/DDBJ databases">
        <title>Complete sequence of Chlorobium chlorochromatii CaD3.</title>
        <authorList>
            <consortium name="US DOE Joint Genome Institute"/>
            <person name="Copeland A."/>
            <person name="Lucas S."/>
            <person name="Lapidus A."/>
            <person name="Barry K."/>
            <person name="Detter J.C."/>
            <person name="Glavina T."/>
            <person name="Hammon N."/>
            <person name="Israni S."/>
            <person name="Pitluck S."/>
            <person name="Bryant D."/>
            <person name="Schmutz J."/>
            <person name="Larimer F."/>
            <person name="Land M."/>
            <person name="Kyrpides N."/>
            <person name="Ivanova N."/>
            <person name="Richardson P."/>
        </authorList>
    </citation>
    <scope>NUCLEOTIDE SEQUENCE [LARGE SCALE GENOMIC DNA]</scope>
    <source>
        <strain>CaD3</strain>
    </source>
</reference>
<evidence type="ECO:0000255" key="1">
    <source>
        <dbReference type="HAMAP-Rule" id="MF_01366"/>
    </source>
</evidence>
<evidence type="ECO:0000305" key="2"/>
<protein>
    <recommendedName>
        <fullName evidence="1">Large ribosomal subunit protein uL13</fullName>
    </recommendedName>
    <alternativeName>
        <fullName evidence="2">50S ribosomal protein L13</fullName>
    </alternativeName>
</protein>